<proteinExistence type="inferred from homology"/>
<evidence type="ECO:0000255" key="1">
    <source>
        <dbReference type="HAMAP-Rule" id="MF_01717"/>
    </source>
</evidence>
<accession>Q8FFU7</accession>
<comment type="function">
    <text evidence="1">Part of the ABC transporter complex MglABC involved in galactose/methyl galactoside import. Responsible for energy coupling to the transport system.</text>
</comment>
<comment type="catalytic activity">
    <reaction evidence="1">
        <text>D-galactose(out) + ATP + H2O = D-galactose(in) + ADP + phosphate + H(+)</text>
        <dbReference type="Rhea" id="RHEA:60156"/>
        <dbReference type="ChEBI" id="CHEBI:4139"/>
        <dbReference type="ChEBI" id="CHEBI:15377"/>
        <dbReference type="ChEBI" id="CHEBI:15378"/>
        <dbReference type="ChEBI" id="CHEBI:30616"/>
        <dbReference type="ChEBI" id="CHEBI:43474"/>
        <dbReference type="ChEBI" id="CHEBI:456216"/>
        <dbReference type="EC" id="7.5.2.11"/>
    </reaction>
    <physiologicalReaction direction="left-to-right" evidence="1">
        <dbReference type="Rhea" id="RHEA:60157"/>
    </physiologicalReaction>
</comment>
<comment type="catalytic activity">
    <reaction evidence="1">
        <text>methyl beta-D-galactoside(out) + ATP + H2O = methyl beta-D-galactoside(in) + ADP + phosphate + H(+)</text>
        <dbReference type="Rhea" id="RHEA:72531"/>
        <dbReference type="ChEBI" id="CHEBI:15377"/>
        <dbReference type="ChEBI" id="CHEBI:15378"/>
        <dbReference type="ChEBI" id="CHEBI:17540"/>
        <dbReference type="ChEBI" id="CHEBI:30616"/>
        <dbReference type="ChEBI" id="CHEBI:43474"/>
        <dbReference type="ChEBI" id="CHEBI:456216"/>
    </reaction>
    <physiologicalReaction direction="left-to-right" evidence="1">
        <dbReference type="Rhea" id="RHEA:72532"/>
    </physiologicalReaction>
</comment>
<comment type="subunit">
    <text evidence="1">The complex is composed of one ATP-binding protein (MglA), two transmembrane proteins (MglC) and a solute-binding protein (MglB).</text>
</comment>
<comment type="subcellular location">
    <subcellularLocation>
        <location evidence="1">Cell inner membrane</location>
        <topology evidence="1">Peripheral membrane protein</topology>
    </subcellularLocation>
</comment>
<comment type="similarity">
    <text evidence="1">Belongs to the ABC transporter superfamily. Galactose/methyl galactoside importer (TC 3.A.1.2.3) family.</text>
</comment>
<dbReference type="EC" id="7.5.2.11" evidence="1"/>
<dbReference type="EMBL" id="AE014075">
    <property type="protein sequence ID" value="AAN81139.1"/>
    <property type="molecule type" value="Genomic_DNA"/>
</dbReference>
<dbReference type="RefSeq" id="WP_000255034.1">
    <property type="nucleotide sequence ID" value="NZ_CP051263.1"/>
</dbReference>
<dbReference type="SMR" id="Q8FFU7"/>
<dbReference type="STRING" id="199310.c2683"/>
<dbReference type="KEGG" id="ecc:c2683"/>
<dbReference type="eggNOG" id="COG1129">
    <property type="taxonomic scope" value="Bacteria"/>
</dbReference>
<dbReference type="HOGENOM" id="CLU_000604_92_3_6"/>
<dbReference type="BioCyc" id="ECOL199310:C2683-MONOMER"/>
<dbReference type="Proteomes" id="UP000001410">
    <property type="component" value="Chromosome"/>
</dbReference>
<dbReference type="GO" id="GO:0005886">
    <property type="term" value="C:plasma membrane"/>
    <property type="evidence" value="ECO:0007669"/>
    <property type="project" value="UniProtKB-SubCell"/>
</dbReference>
<dbReference type="GO" id="GO:0005524">
    <property type="term" value="F:ATP binding"/>
    <property type="evidence" value="ECO:0007669"/>
    <property type="project" value="UniProtKB-KW"/>
</dbReference>
<dbReference type="GO" id="GO:0016887">
    <property type="term" value="F:ATP hydrolysis activity"/>
    <property type="evidence" value="ECO:0007669"/>
    <property type="project" value="InterPro"/>
</dbReference>
<dbReference type="CDD" id="cd03216">
    <property type="entry name" value="ABC_Carb_Monos_I"/>
    <property type="match status" value="1"/>
</dbReference>
<dbReference type="CDD" id="cd03215">
    <property type="entry name" value="ABC_Carb_Monos_II"/>
    <property type="match status" value="1"/>
</dbReference>
<dbReference type="FunFam" id="3.40.50.300:FF:000126">
    <property type="entry name" value="Galactose/methyl galactoside import ATP-binding protein MglA"/>
    <property type="match status" value="1"/>
</dbReference>
<dbReference type="FunFam" id="3.40.50.300:FF:000127">
    <property type="entry name" value="Ribose import ATP-binding protein RbsA"/>
    <property type="match status" value="1"/>
</dbReference>
<dbReference type="Gene3D" id="3.40.50.300">
    <property type="entry name" value="P-loop containing nucleotide triphosphate hydrolases"/>
    <property type="match status" value="2"/>
</dbReference>
<dbReference type="InterPro" id="IPR003593">
    <property type="entry name" value="AAA+_ATPase"/>
</dbReference>
<dbReference type="InterPro" id="IPR050107">
    <property type="entry name" value="ABC_carbohydrate_import_ATPase"/>
</dbReference>
<dbReference type="InterPro" id="IPR003439">
    <property type="entry name" value="ABC_transporter-like_ATP-bd"/>
</dbReference>
<dbReference type="InterPro" id="IPR017871">
    <property type="entry name" value="ABC_transporter-like_CS"/>
</dbReference>
<dbReference type="InterPro" id="IPR027417">
    <property type="entry name" value="P-loop_NTPase"/>
</dbReference>
<dbReference type="NCBIfam" id="NF008215">
    <property type="entry name" value="PRK10982.1"/>
    <property type="match status" value="1"/>
</dbReference>
<dbReference type="PANTHER" id="PTHR43790">
    <property type="entry name" value="CARBOHYDRATE TRANSPORT ATP-BINDING PROTEIN MG119-RELATED"/>
    <property type="match status" value="1"/>
</dbReference>
<dbReference type="PANTHER" id="PTHR43790:SF7">
    <property type="entry name" value="GALACTOSE_METHYL GALACTOSIDE IMPORT ATP-BINDING PROTEIN MGLA"/>
    <property type="match status" value="1"/>
</dbReference>
<dbReference type="Pfam" id="PF00005">
    <property type="entry name" value="ABC_tran"/>
    <property type="match status" value="2"/>
</dbReference>
<dbReference type="SMART" id="SM00382">
    <property type="entry name" value="AAA"/>
    <property type="match status" value="2"/>
</dbReference>
<dbReference type="SUPFAM" id="SSF52540">
    <property type="entry name" value="P-loop containing nucleoside triphosphate hydrolases"/>
    <property type="match status" value="2"/>
</dbReference>
<dbReference type="PROSITE" id="PS00211">
    <property type="entry name" value="ABC_TRANSPORTER_1"/>
    <property type="match status" value="1"/>
</dbReference>
<dbReference type="PROSITE" id="PS50893">
    <property type="entry name" value="ABC_TRANSPORTER_2"/>
    <property type="match status" value="2"/>
</dbReference>
<dbReference type="PROSITE" id="PS51260">
    <property type="entry name" value="MGLA"/>
    <property type="match status" value="1"/>
</dbReference>
<gene>
    <name evidence="1" type="primary">mglA</name>
    <name type="ordered locus">c2683</name>
</gene>
<keyword id="KW-0067">ATP-binding</keyword>
<keyword id="KW-0997">Cell inner membrane</keyword>
<keyword id="KW-1003">Cell membrane</keyword>
<keyword id="KW-0472">Membrane</keyword>
<keyword id="KW-0547">Nucleotide-binding</keyword>
<keyword id="KW-1185">Reference proteome</keyword>
<keyword id="KW-0677">Repeat</keyword>
<keyword id="KW-0762">Sugar transport</keyword>
<keyword id="KW-1278">Translocase</keyword>
<keyword id="KW-0813">Transport</keyword>
<protein>
    <recommendedName>
        <fullName evidence="1">Galactose/methyl galactoside import ATP-binding protein MglA</fullName>
        <ecNumber evidence="1">7.5.2.11</ecNumber>
    </recommendedName>
</protein>
<name>MGLA_ECOL6</name>
<organism>
    <name type="scientific">Escherichia coli O6:H1 (strain CFT073 / ATCC 700928 / UPEC)</name>
    <dbReference type="NCBI Taxonomy" id="199310"/>
    <lineage>
        <taxon>Bacteria</taxon>
        <taxon>Pseudomonadati</taxon>
        <taxon>Pseudomonadota</taxon>
        <taxon>Gammaproteobacteria</taxon>
        <taxon>Enterobacterales</taxon>
        <taxon>Enterobacteriaceae</taxon>
        <taxon>Escherichia</taxon>
    </lineage>
</organism>
<reference key="1">
    <citation type="journal article" date="2002" name="Proc. Natl. Acad. Sci. U.S.A.">
        <title>Extensive mosaic structure revealed by the complete genome sequence of uropathogenic Escherichia coli.</title>
        <authorList>
            <person name="Welch R.A."/>
            <person name="Burland V."/>
            <person name="Plunkett G. III"/>
            <person name="Redford P."/>
            <person name="Roesch P."/>
            <person name="Rasko D."/>
            <person name="Buckles E.L."/>
            <person name="Liou S.-R."/>
            <person name="Boutin A."/>
            <person name="Hackett J."/>
            <person name="Stroud D."/>
            <person name="Mayhew G.F."/>
            <person name="Rose D.J."/>
            <person name="Zhou S."/>
            <person name="Schwartz D.C."/>
            <person name="Perna N.T."/>
            <person name="Mobley H.L.T."/>
            <person name="Donnenberg M.S."/>
            <person name="Blattner F.R."/>
        </authorList>
    </citation>
    <scope>NUCLEOTIDE SEQUENCE [LARGE SCALE GENOMIC DNA]</scope>
    <source>
        <strain>CFT073 / ATCC 700928 / UPEC</strain>
    </source>
</reference>
<sequence length="506" mass="56388">MVSSTTPSSGEYLLEMSGINKSFPGVKALDNVNLKVRPHSIHALMGENGAGKSTLLKCLFGIYQKDSGTILFQGKEIDFHSAKEALENGISMVHQELNLVLQRSVMDNMWLGRYPTKGMFVDQDKMYRETKAIFDELDIDIDPRARVGTLSVSQMQMIEIAKAFSYNAKIVIMDEPTSSLTEKEVNHLFTIIRKLKERGCGIVYISHKMEEIFQLCDEVTVLRDGQWIATEPLAGLTMDKIIAMMVGRSLNQRFPDKENKPGEVILEVRNLTSLRQPSIRDVSFDLHKGEILGIAGLVGAKRTDIVETLFGIREKSAGTITLHGKKINNHNANEAINHGFALVTEERRSTGIYAYLDIGFNSLISNIRNYKNKVGLLDNSRMKSDTQWVIDSMRVKTPGHRTQIGSLSGGNQQKVIIGRWLLTQPEILMLDEPTRGIDVGAKFEIYQLIAELAKKGKGIIIISSEMPELLGITDRILVMSNGLVSGIVDTKTTTQSEILRLASLHL</sequence>
<feature type="chain" id="PRO_0000261365" description="Galactose/methyl galactoside import ATP-binding protein MglA">
    <location>
        <begin position="1"/>
        <end position="506"/>
    </location>
</feature>
<feature type="domain" description="ABC transporter 1" evidence="1">
    <location>
        <begin position="14"/>
        <end position="249"/>
    </location>
</feature>
<feature type="domain" description="ABC transporter 2" evidence="1">
    <location>
        <begin position="264"/>
        <end position="506"/>
    </location>
</feature>
<feature type="binding site" evidence="1">
    <location>
        <begin position="46"/>
        <end position="53"/>
    </location>
    <ligand>
        <name>ATP</name>
        <dbReference type="ChEBI" id="CHEBI:30616"/>
    </ligand>
</feature>